<proteinExistence type="inferred from homology"/>
<dbReference type="EC" id="2.7.7.6" evidence="1"/>
<dbReference type="EMBL" id="CR931997">
    <property type="protein sequence ID" value="CAI37935.1"/>
    <property type="molecule type" value="Genomic_DNA"/>
</dbReference>
<dbReference type="RefSeq" id="WP_005291867.1">
    <property type="nucleotide sequence ID" value="NC_007164.1"/>
</dbReference>
<dbReference type="SMR" id="Q4JTC2"/>
<dbReference type="STRING" id="306537.jk1758"/>
<dbReference type="GeneID" id="92739394"/>
<dbReference type="KEGG" id="cjk:jk1758"/>
<dbReference type="eggNOG" id="COG0202">
    <property type="taxonomic scope" value="Bacteria"/>
</dbReference>
<dbReference type="HOGENOM" id="CLU_053084_0_1_11"/>
<dbReference type="OrthoDB" id="9805706at2"/>
<dbReference type="Proteomes" id="UP000000545">
    <property type="component" value="Chromosome"/>
</dbReference>
<dbReference type="GO" id="GO:0005737">
    <property type="term" value="C:cytoplasm"/>
    <property type="evidence" value="ECO:0007669"/>
    <property type="project" value="UniProtKB-ARBA"/>
</dbReference>
<dbReference type="GO" id="GO:0000428">
    <property type="term" value="C:DNA-directed RNA polymerase complex"/>
    <property type="evidence" value="ECO:0007669"/>
    <property type="project" value="UniProtKB-KW"/>
</dbReference>
<dbReference type="GO" id="GO:0003677">
    <property type="term" value="F:DNA binding"/>
    <property type="evidence" value="ECO:0007669"/>
    <property type="project" value="UniProtKB-UniRule"/>
</dbReference>
<dbReference type="GO" id="GO:0003899">
    <property type="term" value="F:DNA-directed RNA polymerase activity"/>
    <property type="evidence" value="ECO:0007669"/>
    <property type="project" value="UniProtKB-UniRule"/>
</dbReference>
<dbReference type="GO" id="GO:0046983">
    <property type="term" value="F:protein dimerization activity"/>
    <property type="evidence" value="ECO:0007669"/>
    <property type="project" value="InterPro"/>
</dbReference>
<dbReference type="GO" id="GO:0006351">
    <property type="term" value="P:DNA-templated transcription"/>
    <property type="evidence" value="ECO:0007669"/>
    <property type="project" value="UniProtKB-UniRule"/>
</dbReference>
<dbReference type="CDD" id="cd06928">
    <property type="entry name" value="RNAP_alpha_NTD"/>
    <property type="match status" value="1"/>
</dbReference>
<dbReference type="FunFam" id="1.10.150.20:FF:000001">
    <property type="entry name" value="DNA-directed RNA polymerase subunit alpha"/>
    <property type="match status" value="1"/>
</dbReference>
<dbReference type="FunFam" id="2.170.120.12:FF:000001">
    <property type="entry name" value="DNA-directed RNA polymerase subunit alpha"/>
    <property type="match status" value="1"/>
</dbReference>
<dbReference type="Gene3D" id="1.10.150.20">
    <property type="entry name" value="5' to 3' exonuclease, C-terminal subdomain"/>
    <property type="match status" value="1"/>
</dbReference>
<dbReference type="Gene3D" id="2.170.120.12">
    <property type="entry name" value="DNA-directed RNA polymerase, insert domain"/>
    <property type="match status" value="1"/>
</dbReference>
<dbReference type="Gene3D" id="3.30.1360.10">
    <property type="entry name" value="RNA polymerase, RBP11-like subunit"/>
    <property type="match status" value="1"/>
</dbReference>
<dbReference type="HAMAP" id="MF_00059">
    <property type="entry name" value="RNApol_bact_RpoA"/>
    <property type="match status" value="1"/>
</dbReference>
<dbReference type="InterPro" id="IPR011262">
    <property type="entry name" value="DNA-dir_RNA_pol_insert"/>
</dbReference>
<dbReference type="InterPro" id="IPR011263">
    <property type="entry name" value="DNA-dir_RNA_pol_RpoA/D/Rpb3"/>
</dbReference>
<dbReference type="InterPro" id="IPR011773">
    <property type="entry name" value="DNA-dir_RpoA"/>
</dbReference>
<dbReference type="InterPro" id="IPR036603">
    <property type="entry name" value="RBP11-like"/>
</dbReference>
<dbReference type="InterPro" id="IPR011260">
    <property type="entry name" value="RNAP_asu_C"/>
</dbReference>
<dbReference type="InterPro" id="IPR036643">
    <property type="entry name" value="RNApol_insert_sf"/>
</dbReference>
<dbReference type="NCBIfam" id="NF003513">
    <property type="entry name" value="PRK05182.1-2"/>
    <property type="match status" value="1"/>
</dbReference>
<dbReference type="NCBIfam" id="NF003514">
    <property type="entry name" value="PRK05182.1-4"/>
    <property type="match status" value="1"/>
</dbReference>
<dbReference type="NCBIfam" id="NF003519">
    <property type="entry name" value="PRK05182.2-5"/>
    <property type="match status" value="1"/>
</dbReference>
<dbReference type="NCBIfam" id="TIGR02027">
    <property type="entry name" value="rpoA"/>
    <property type="match status" value="1"/>
</dbReference>
<dbReference type="Pfam" id="PF01000">
    <property type="entry name" value="RNA_pol_A_bac"/>
    <property type="match status" value="1"/>
</dbReference>
<dbReference type="Pfam" id="PF03118">
    <property type="entry name" value="RNA_pol_A_CTD"/>
    <property type="match status" value="1"/>
</dbReference>
<dbReference type="Pfam" id="PF01193">
    <property type="entry name" value="RNA_pol_L"/>
    <property type="match status" value="1"/>
</dbReference>
<dbReference type="SMART" id="SM00662">
    <property type="entry name" value="RPOLD"/>
    <property type="match status" value="1"/>
</dbReference>
<dbReference type="SUPFAM" id="SSF47789">
    <property type="entry name" value="C-terminal domain of RNA polymerase alpha subunit"/>
    <property type="match status" value="1"/>
</dbReference>
<dbReference type="SUPFAM" id="SSF56553">
    <property type="entry name" value="Insert subdomain of RNA polymerase alpha subunit"/>
    <property type="match status" value="1"/>
</dbReference>
<dbReference type="SUPFAM" id="SSF55257">
    <property type="entry name" value="RBP11-like subunits of RNA polymerase"/>
    <property type="match status" value="1"/>
</dbReference>
<accession>Q4JTC2</accession>
<feature type="chain" id="PRO_0000225268" description="DNA-directed RNA polymerase subunit alpha">
    <location>
        <begin position="1"/>
        <end position="337"/>
    </location>
</feature>
<feature type="region of interest" description="Alpha N-terminal domain (alpha-NTD)" evidence="1">
    <location>
        <begin position="1"/>
        <end position="223"/>
    </location>
</feature>
<feature type="region of interest" description="Alpha C-terminal domain (alpha-CTD)" evidence="1">
    <location>
        <begin position="238"/>
        <end position="337"/>
    </location>
</feature>
<evidence type="ECO:0000255" key="1">
    <source>
        <dbReference type="HAMAP-Rule" id="MF_00059"/>
    </source>
</evidence>
<keyword id="KW-0240">DNA-directed RNA polymerase</keyword>
<keyword id="KW-0548">Nucleotidyltransferase</keyword>
<keyword id="KW-1185">Reference proteome</keyword>
<keyword id="KW-0804">Transcription</keyword>
<keyword id="KW-0808">Transferase</keyword>
<sequence length="337" mass="36817">MLISQRPALTEEFIDDSRSRFVIEPLEPGFGYTLGNSLRRTLLSSIPGAAVTSLRIEGVLHEFTTIPGVKEDVSDIILNIKSLVLSSDSDEPVSMFIRKEGPGEVTGADVEVPAGVEVHNQDLHIATLNEQGKLEIEMTVERGRGYVPAATASSEIGRIPVDQIYSPVLKVSYKVEATRVEQRTDFDKLILDVETKNSITARDAMASAGKTLVELFGLAQELNHEAEGIEIGPSPQESEHIAAYSMPIEDLNFSVRSYNCLKREEIHTVGELAARTESDLLDIRNFGQKSINEVKVKLAGLGLGLKDAPEGFDITDIEGYDAETGEFIDTEGEDIAE</sequence>
<protein>
    <recommendedName>
        <fullName evidence="1">DNA-directed RNA polymerase subunit alpha</fullName>
        <shortName evidence="1">RNAP subunit alpha</shortName>
        <ecNumber evidence="1">2.7.7.6</ecNumber>
    </recommendedName>
    <alternativeName>
        <fullName evidence="1">RNA polymerase subunit alpha</fullName>
    </alternativeName>
    <alternativeName>
        <fullName evidence="1">Transcriptase subunit alpha</fullName>
    </alternativeName>
</protein>
<comment type="function">
    <text evidence="1">DNA-dependent RNA polymerase catalyzes the transcription of DNA into RNA using the four ribonucleoside triphosphates as substrates.</text>
</comment>
<comment type="catalytic activity">
    <reaction evidence="1">
        <text>RNA(n) + a ribonucleoside 5'-triphosphate = RNA(n+1) + diphosphate</text>
        <dbReference type="Rhea" id="RHEA:21248"/>
        <dbReference type="Rhea" id="RHEA-COMP:14527"/>
        <dbReference type="Rhea" id="RHEA-COMP:17342"/>
        <dbReference type="ChEBI" id="CHEBI:33019"/>
        <dbReference type="ChEBI" id="CHEBI:61557"/>
        <dbReference type="ChEBI" id="CHEBI:140395"/>
        <dbReference type="EC" id="2.7.7.6"/>
    </reaction>
</comment>
<comment type="subunit">
    <text evidence="1">Homodimer. The RNAP catalytic core consists of 2 alpha, 1 beta, 1 beta' and 1 omega subunit. When a sigma factor is associated with the core the holoenzyme is formed, which can initiate transcription.</text>
</comment>
<comment type="domain">
    <text evidence="1">The N-terminal domain is essential for RNAP assembly and basal transcription, whereas the C-terminal domain is involved in interaction with transcriptional regulators and with upstream promoter elements.</text>
</comment>
<comment type="similarity">
    <text evidence="1">Belongs to the RNA polymerase alpha chain family.</text>
</comment>
<organism>
    <name type="scientific">Corynebacterium jeikeium (strain K411)</name>
    <dbReference type="NCBI Taxonomy" id="306537"/>
    <lineage>
        <taxon>Bacteria</taxon>
        <taxon>Bacillati</taxon>
        <taxon>Actinomycetota</taxon>
        <taxon>Actinomycetes</taxon>
        <taxon>Mycobacteriales</taxon>
        <taxon>Corynebacteriaceae</taxon>
        <taxon>Corynebacterium</taxon>
    </lineage>
</organism>
<name>RPOA_CORJK</name>
<gene>
    <name evidence="1" type="primary">rpoA</name>
    <name type="ordered locus">jk1758</name>
</gene>
<reference key="1">
    <citation type="journal article" date="2005" name="J. Bacteriol.">
        <title>Complete genome sequence and analysis of the multiresistant nosocomial pathogen Corynebacterium jeikeium K411, a lipid-requiring bacterium of the human skin flora.</title>
        <authorList>
            <person name="Tauch A."/>
            <person name="Kaiser O."/>
            <person name="Hain T."/>
            <person name="Goesmann A."/>
            <person name="Weisshaar B."/>
            <person name="Albersmeier A."/>
            <person name="Bekel T."/>
            <person name="Bischoff N."/>
            <person name="Brune I."/>
            <person name="Chakraborty T."/>
            <person name="Kalinowski J."/>
            <person name="Meyer F."/>
            <person name="Rupp O."/>
            <person name="Schneiker S."/>
            <person name="Viehoever P."/>
            <person name="Puehler A."/>
        </authorList>
    </citation>
    <scope>NUCLEOTIDE SEQUENCE [LARGE SCALE GENOMIC DNA]</scope>
    <source>
        <strain>K411</strain>
    </source>
</reference>